<evidence type="ECO:0000250" key="1"/>
<evidence type="ECO:0000250" key="2">
    <source>
        <dbReference type="UniProtKB" id="P21461"/>
    </source>
</evidence>
<evidence type="ECO:0000255" key="3">
    <source>
        <dbReference type="PROSITE-ProRule" id="PRU00175"/>
    </source>
</evidence>
<evidence type="ECO:0000255" key="4">
    <source>
        <dbReference type="PROSITE-ProRule" id="PRU00455"/>
    </source>
</evidence>
<evidence type="ECO:0000256" key="5">
    <source>
        <dbReference type="SAM" id="MobiDB-lite"/>
    </source>
</evidence>
<evidence type="ECO:0000305" key="6"/>
<sequence length="314" mass="33804">MSNKINPKRREPTVAAAVAAATAVVATNTSSSTGSSAGNTSSANTSSSSSSSLSSAGGGDAGMSADLTSLFECPVCFDYVLPPILQCSSGHLVCVSCRSKLTCCPTCRGPLANIRNLAMEEVASNVKFPCKHSGYGCTASLVYTEKTEHEETCECRPYLCPCPGASCKWQGPLDLVMQHLMMSHKSITTLQGEDIVFLATDINLPGAVDWVMMQSCFGHHFMLVLEKQEKYDGHQQFFAIVQLIGSRKEAENFVYRLELNGNRRRLTWEAMPRSIHEGVASAIHNSDCLVFDTSIAQLFADNGNLGINVTISLV</sequence>
<keyword id="KW-0963">Cytoplasm</keyword>
<keyword id="KW-0217">Developmental protein</keyword>
<keyword id="KW-0479">Metal-binding</keyword>
<keyword id="KW-0539">Nucleus</keyword>
<keyword id="KW-0716">Sensory transduction</keyword>
<keyword id="KW-0808">Transferase</keyword>
<keyword id="KW-0833">Ubl conjugation pathway</keyword>
<keyword id="KW-0844">Vision</keyword>
<keyword id="KW-0862">Zinc</keyword>
<keyword id="KW-0863">Zinc-finger</keyword>
<name>SINA_DROVI</name>
<proteinExistence type="inferred from homology"/>
<gene>
    <name type="primary">sina</name>
</gene>
<feature type="chain" id="PRO_0000056176" description="E3 ubiquitin-protein ligase sina">
    <location>
        <begin position="1"/>
        <end position="314"/>
    </location>
</feature>
<feature type="zinc finger region" description="RING-type" evidence="3">
    <location>
        <begin position="73"/>
        <end position="108"/>
    </location>
</feature>
<feature type="zinc finger region" description="SIAH-type" evidence="4">
    <location>
        <begin position="125"/>
        <end position="185"/>
    </location>
</feature>
<feature type="region of interest" description="Disordered" evidence="5">
    <location>
        <begin position="27"/>
        <end position="55"/>
    </location>
</feature>
<feature type="region of interest" description="SBD">
    <location>
        <begin position="122"/>
        <end position="314"/>
    </location>
</feature>
<feature type="binding site" evidence="1">
    <location>
        <position position="130"/>
    </location>
    <ligand>
        <name>Zn(2+)</name>
        <dbReference type="ChEBI" id="CHEBI:29105"/>
        <label>1</label>
    </ligand>
</feature>
<feature type="binding site" evidence="1">
    <location>
        <position position="137"/>
    </location>
    <ligand>
        <name>Zn(2+)</name>
        <dbReference type="ChEBI" id="CHEBI:29105"/>
        <label>1</label>
    </ligand>
</feature>
<feature type="binding site" evidence="1">
    <location>
        <position position="149"/>
    </location>
    <ligand>
        <name>Zn(2+)</name>
        <dbReference type="ChEBI" id="CHEBI:29105"/>
        <label>1</label>
    </ligand>
</feature>
<feature type="binding site" evidence="1">
    <location>
        <position position="153"/>
    </location>
    <ligand>
        <name>Zn(2+)</name>
        <dbReference type="ChEBI" id="CHEBI:29105"/>
        <label>1</label>
    </ligand>
</feature>
<feature type="binding site" evidence="1">
    <location>
        <position position="160"/>
    </location>
    <ligand>
        <name>Zn(2+)</name>
        <dbReference type="ChEBI" id="CHEBI:29105"/>
        <label>2</label>
    </ligand>
</feature>
<feature type="binding site" evidence="1">
    <location>
        <position position="167"/>
    </location>
    <ligand>
        <name>Zn(2+)</name>
        <dbReference type="ChEBI" id="CHEBI:29105"/>
        <label>2</label>
    </ligand>
</feature>
<feature type="binding site" evidence="1">
    <location>
        <position position="179"/>
    </location>
    <ligand>
        <name>Zn(2+)</name>
        <dbReference type="ChEBI" id="CHEBI:29105"/>
        <label>2</label>
    </ligand>
</feature>
<feature type="binding site" evidence="1">
    <location>
        <position position="184"/>
    </location>
    <ligand>
        <name>Zn(2+)</name>
        <dbReference type="ChEBI" id="CHEBI:29105"/>
        <label>2</label>
    </ligand>
</feature>
<accession>P29304</accession>
<comment type="function">
    <text evidence="2">E3 ubiquitin-protein ligase that is required for specification of R7 photoreceptor cell fate in the eye by mediating the ubiquitination and subsequent proteasomal degradation of Tramtrack (ttk). E3 Ubiquitin ligases accept ubiquitin from an E2 ubiquitin-conjugating enzyme in the form of a thioester and then directly transfers the ubiquitin to targeted substrates. Acts via the formation of a complex with ebi and phyl that ubiquitinates the transcription repressor ttk, a general inhibitor of photoreceptor differentiation, in a subset of photoreceptor cells in the eye, leading to the differentiation of cells into neurons. Also involved in external sensory organ development.</text>
</comment>
<comment type="catalytic activity">
    <reaction>
        <text>S-ubiquitinyl-[E2 ubiquitin-conjugating enzyme]-L-cysteine + [acceptor protein]-L-lysine = [E2 ubiquitin-conjugating enzyme]-L-cysteine + N(6)-ubiquitinyl-[acceptor protein]-L-lysine.</text>
        <dbReference type="EC" id="2.3.2.27"/>
    </reaction>
</comment>
<comment type="pathway">
    <text>Protein modification; protein ubiquitination.</text>
</comment>
<comment type="subunit">
    <text evidence="2">Component of some E3 complex at least composed of sina, ebi and phyl. Interacts with eff.</text>
</comment>
<comment type="subcellular location">
    <subcellularLocation>
        <location evidence="2">Cytoplasm</location>
    </subcellularLocation>
    <subcellularLocation>
        <location evidence="2">Nucleus</location>
    </subcellularLocation>
</comment>
<comment type="domain">
    <text evidence="1">The RING-type zinc finger domain is essential for ubiquitin ligase activity.</text>
</comment>
<comment type="domain">
    <text evidence="1">The SBD domain (substrate-binding domain) mediates the interaction with substrate proteins. It is related to the TRAF family.</text>
</comment>
<comment type="similarity">
    <text evidence="6">Belongs to the SINA (Seven in absentia) family.</text>
</comment>
<organism>
    <name type="scientific">Drosophila virilis</name>
    <name type="common">Fruit fly</name>
    <dbReference type="NCBI Taxonomy" id="7244"/>
    <lineage>
        <taxon>Eukaryota</taxon>
        <taxon>Metazoa</taxon>
        <taxon>Ecdysozoa</taxon>
        <taxon>Arthropoda</taxon>
        <taxon>Hexapoda</taxon>
        <taxon>Insecta</taxon>
        <taxon>Pterygota</taxon>
        <taxon>Neoptera</taxon>
        <taxon>Endopterygota</taxon>
        <taxon>Diptera</taxon>
        <taxon>Brachycera</taxon>
        <taxon>Muscomorpha</taxon>
        <taxon>Ephydroidea</taxon>
        <taxon>Drosophilidae</taxon>
        <taxon>Drosophila</taxon>
    </lineage>
</organism>
<protein>
    <recommendedName>
        <fullName>E3 ubiquitin-protein ligase sina</fullName>
        <ecNumber>2.3.2.27</ecNumber>
    </recommendedName>
    <alternativeName>
        <fullName evidence="6">RING-type E3 ubiquitin transferase sina</fullName>
    </alternativeName>
    <alternativeName>
        <fullName>Seven in absentia protein</fullName>
    </alternativeName>
</protein>
<dbReference type="EC" id="2.3.2.27"/>
<dbReference type="EMBL" id="M77282">
    <property type="protein sequence ID" value="AAA28899.1"/>
    <property type="molecule type" value="Genomic_DNA"/>
</dbReference>
<dbReference type="PIR" id="A41544">
    <property type="entry name" value="A41544"/>
</dbReference>
<dbReference type="SMR" id="P29304"/>
<dbReference type="eggNOG" id="KOG3002">
    <property type="taxonomic scope" value="Eukaryota"/>
</dbReference>
<dbReference type="OrthoDB" id="941555at2759"/>
<dbReference type="UniPathway" id="UPA00143"/>
<dbReference type="GO" id="GO:0005737">
    <property type="term" value="C:cytoplasm"/>
    <property type="evidence" value="ECO:0007669"/>
    <property type="project" value="UniProtKB-SubCell"/>
</dbReference>
<dbReference type="GO" id="GO:0005634">
    <property type="term" value="C:nucleus"/>
    <property type="evidence" value="ECO:0000250"/>
    <property type="project" value="UniProtKB"/>
</dbReference>
<dbReference type="GO" id="GO:0031624">
    <property type="term" value="F:ubiquitin conjugating enzyme binding"/>
    <property type="evidence" value="ECO:0007669"/>
    <property type="project" value="TreeGrafter"/>
</dbReference>
<dbReference type="GO" id="GO:0061630">
    <property type="term" value="F:ubiquitin protein ligase activity"/>
    <property type="evidence" value="ECO:0007669"/>
    <property type="project" value="TreeGrafter"/>
</dbReference>
<dbReference type="GO" id="GO:0008270">
    <property type="term" value="F:zinc ion binding"/>
    <property type="evidence" value="ECO:0007669"/>
    <property type="project" value="UniProtKB-KW"/>
</dbReference>
<dbReference type="GO" id="GO:0043161">
    <property type="term" value="P:proteasome-mediated ubiquitin-dependent protein catabolic process"/>
    <property type="evidence" value="ECO:0007669"/>
    <property type="project" value="TreeGrafter"/>
</dbReference>
<dbReference type="GO" id="GO:0016567">
    <property type="term" value="P:protein ubiquitination"/>
    <property type="evidence" value="ECO:0007669"/>
    <property type="project" value="UniProtKB-UniPathway"/>
</dbReference>
<dbReference type="GO" id="GO:0045676">
    <property type="term" value="P:regulation of R7 cell differentiation"/>
    <property type="evidence" value="ECO:0000250"/>
    <property type="project" value="UniProtKB"/>
</dbReference>
<dbReference type="GO" id="GO:0007423">
    <property type="term" value="P:sensory organ development"/>
    <property type="evidence" value="ECO:0000250"/>
    <property type="project" value="UniProtKB"/>
</dbReference>
<dbReference type="GO" id="GO:0006511">
    <property type="term" value="P:ubiquitin-dependent protein catabolic process"/>
    <property type="evidence" value="ECO:0000250"/>
    <property type="project" value="UniProtKB"/>
</dbReference>
<dbReference type="GO" id="GO:0007601">
    <property type="term" value="P:visual perception"/>
    <property type="evidence" value="ECO:0007669"/>
    <property type="project" value="UniProtKB-KW"/>
</dbReference>
<dbReference type="CDD" id="cd03829">
    <property type="entry name" value="Sina"/>
    <property type="match status" value="1"/>
</dbReference>
<dbReference type="FunFam" id="2.60.210.10:FF:000002">
    <property type="entry name" value="E3 ubiquitin-protein ligase"/>
    <property type="match status" value="1"/>
</dbReference>
<dbReference type="FunFam" id="3.30.40.10:FF:000063">
    <property type="entry name" value="E3 ubiquitin-protein ligase"/>
    <property type="match status" value="1"/>
</dbReference>
<dbReference type="FunFam" id="3.30.40.10:FF:000041">
    <property type="entry name" value="E3 ubiquitin-protein ligase SINAT3"/>
    <property type="match status" value="1"/>
</dbReference>
<dbReference type="Gene3D" id="2.60.210.10">
    <property type="entry name" value="Apoptosis, Tumor Necrosis Factor Receptor Associated Protein 2, Chain A"/>
    <property type="match status" value="1"/>
</dbReference>
<dbReference type="Gene3D" id="3.30.40.10">
    <property type="entry name" value="Zinc/RING finger domain, C3HC4 (zinc finger)"/>
    <property type="match status" value="2"/>
</dbReference>
<dbReference type="InterPro" id="IPR018121">
    <property type="entry name" value="7-in-absentia-prot_TRAF-dom"/>
</dbReference>
<dbReference type="InterPro" id="IPR004162">
    <property type="entry name" value="SINA-like_animal"/>
</dbReference>
<dbReference type="InterPro" id="IPR049548">
    <property type="entry name" value="Sina-like_RING"/>
</dbReference>
<dbReference type="InterPro" id="IPR008974">
    <property type="entry name" value="TRAF-like"/>
</dbReference>
<dbReference type="InterPro" id="IPR001841">
    <property type="entry name" value="Znf_RING"/>
</dbReference>
<dbReference type="InterPro" id="IPR013083">
    <property type="entry name" value="Znf_RING/FYVE/PHD"/>
</dbReference>
<dbReference type="InterPro" id="IPR013010">
    <property type="entry name" value="Znf_SIAH"/>
</dbReference>
<dbReference type="PANTHER" id="PTHR45877">
    <property type="entry name" value="E3 UBIQUITIN-PROTEIN LIGASE SIAH2"/>
    <property type="match status" value="1"/>
</dbReference>
<dbReference type="PANTHER" id="PTHR45877:SF2">
    <property type="entry name" value="E3 UBIQUITIN-PROTEIN LIGASE SINA-RELATED"/>
    <property type="match status" value="1"/>
</dbReference>
<dbReference type="Pfam" id="PF21362">
    <property type="entry name" value="Sina_RING"/>
    <property type="match status" value="1"/>
</dbReference>
<dbReference type="Pfam" id="PF03145">
    <property type="entry name" value="Sina_TRAF"/>
    <property type="match status" value="1"/>
</dbReference>
<dbReference type="Pfam" id="PF21361">
    <property type="entry name" value="Sina_ZnF"/>
    <property type="match status" value="1"/>
</dbReference>
<dbReference type="SUPFAM" id="SSF57850">
    <property type="entry name" value="RING/U-box"/>
    <property type="match status" value="1"/>
</dbReference>
<dbReference type="SUPFAM" id="SSF49599">
    <property type="entry name" value="TRAF domain-like"/>
    <property type="match status" value="1"/>
</dbReference>
<dbReference type="PROSITE" id="PS50089">
    <property type="entry name" value="ZF_RING_2"/>
    <property type="match status" value="1"/>
</dbReference>
<dbReference type="PROSITE" id="PS51081">
    <property type="entry name" value="ZF_SIAH"/>
    <property type="match status" value="1"/>
</dbReference>
<reference key="1">
    <citation type="journal article" date="1991" name="Proc. Natl. Acad. Sci. U.S.A.">
        <title>Evolution of gene position: chromosomal arrangement and sequence comparison of the Drosophila melanogaster and Drosophila virilis sina and Rh4 genes.</title>
        <authorList>
            <person name="Neufeld T.P."/>
            <person name="Carthew R.W."/>
            <person name="Rubin G.M."/>
        </authorList>
    </citation>
    <scope>NUCLEOTIDE SEQUENCE [GENOMIC DNA]</scope>
</reference>